<sequence>MHDSTLETRLAELESRLAFQEITIEDLNKTVTAHEIEMAKMREHMRLMIEKLKATQPSHIASQAEETPPPHY</sequence>
<dbReference type="EMBL" id="CP000964">
    <property type="protein sequence ID" value="ACI10652.1"/>
    <property type="molecule type" value="Genomic_DNA"/>
</dbReference>
<dbReference type="SMR" id="B5XN79"/>
<dbReference type="KEGG" id="kpe:KPK_0384"/>
<dbReference type="HOGENOM" id="CLU_180796_4_2_6"/>
<dbReference type="Proteomes" id="UP000001734">
    <property type="component" value="Chromosome"/>
</dbReference>
<dbReference type="Gene3D" id="1.20.5.300">
    <property type="match status" value="1"/>
</dbReference>
<dbReference type="HAMAP" id="MF_00715">
    <property type="entry name" value="SlyX"/>
    <property type="match status" value="1"/>
</dbReference>
<dbReference type="InterPro" id="IPR007236">
    <property type="entry name" value="SlyX"/>
</dbReference>
<dbReference type="NCBIfam" id="NF002750">
    <property type="entry name" value="PRK02793.1"/>
    <property type="match status" value="1"/>
</dbReference>
<dbReference type="PANTHER" id="PTHR36508">
    <property type="entry name" value="PROTEIN SLYX"/>
    <property type="match status" value="1"/>
</dbReference>
<dbReference type="PANTHER" id="PTHR36508:SF1">
    <property type="entry name" value="PROTEIN SLYX"/>
    <property type="match status" value="1"/>
</dbReference>
<dbReference type="Pfam" id="PF04102">
    <property type="entry name" value="SlyX"/>
    <property type="match status" value="1"/>
</dbReference>
<evidence type="ECO:0000255" key="1">
    <source>
        <dbReference type="HAMAP-Rule" id="MF_00715"/>
    </source>
</evidence>
<gene>
    <name evidence="1" type="primary">slyX</name>
    <name type="ordered locus">KPK_0384</name>
</gene>
<feature type="chain" id="PRO_1000195841" description="Protein SlyX">
    <location>
        <begin position="1"/>
        <end position="72"/>
    </location>
</feature>
<comment type="similarity">
    <text evidence="1">Belongs to the SlyX family.</text>
</comment>
<name>SLYX_KLEP3</name>
<proteinExistence type="inferred from homology"/>
<organism>
    <name type="scientific">Klebsiella pneumoniae (strain 342)</name>
    <dbReference type="NCBI Taxonomy" id="507522"/>
    <lineage>
        <taxon>Bacteria</taxon>
        <taxon>Pseudomonadati</taxon>
        <taxon>Pseudomonadota</taxon>
        <taxon>Gammaproteobacteria</taxon>
        <taxon>Enterobacterales</taxon>
        <taxon>Enterobacteriaceae</taxon>
        <taxon>Klebsiella/Raoultella group</taxon>
        <taxon>Klebsiella</taxon>
        <taxon>Klebsiella pneumoniae complex</taxon>
    </lineage>
</organism>
<accession>B5XN79</accession>
<reference key="1">
    <citation type="journal article" date="2008" name="PLoS Genet.">
        <title>Complete genome sequence of the N2-fixing broad host range endophyte Klebsiella pneumoniae 342 and virulence predictions verified in mice.</title>
        <authorList>
            <person name="Fouts D.E."/>
            <person name="Tyler H.L."/>
            <person name="DeBoy R.T."/>
            <person name="Daugherty S."/>
            <person name="Ren Q."/>
            <person name="Badger J.H."/>
            <person name="Durkin A.S."/>
            <person name="Huot H."/>
            <person name="Shrivastava S."/>
            <person name="Kothari S."/>
            <person name="Dodson R.J."/>
            <person name="Mohamoud Y."/>
            <person name="Khouri H."/>
            <person name="Roesch L.F.W."/>
            <person name="Krogfelt K.A."/>
            <person name="Struve C."/>
            <person name="Triplett E.W."/>
            <person name="Methe B.A."/>
        </authorList>
    </citation>
    <scope>NUCLEOTIDE SEQUENCE [LARGE SCALE GENOMIC DNA]</scope>
    <source>
        <strain>342</strain>
    </source>
</reference>
<protein>
    <recommendedName>
        <fullName evidence="1">Protein SlyX</fullName>
    </recommendedName>
</protein>